<protein>
    <recommendedName>
        <fullName evidence="1">Large ribosomal subunit protein bL36</fullName>
    </recommendedName>
    <alternativeName>
        <fullName evidence="2">50S ribosomal protein L36</fullName>
    </alternativeName>
</protein>
<organism>
    <name type="scientific">Streptococcus equi subsp. equi (strain 4047)</name>
    <dbReference type="NCBI Taxonomy" id="553482"/>
    <lineage>
        <taxon>Bacteria</taxon>
        <taxon>Bacillati</taxon>
        <taxon>Bacillota</taxon>
        <taxon>Bacilli</taxon>
        <taxon>Lactobacillales</taxon>
        <taxon>Streptococcaceae</taxon>
        <taxon>Streptococcus</taxon>
    </lineage>
</organism>
<comment type="similarity">
    <text evidence="1">Belongs to the bacterial ribosomal protein bL36 family.</text>
</comment>
<sequence>MKVRPSVKPICEYCKVIRRNGRVMVICPTNPKHKQRQG</sequence>
<dbReference type="EMBL" id="FM204883">
    <property type="protein sequence ID" value="CAW92009.1"/>
    <property type="molecule type" value="Genomic_DNA"/>
</dbReference>
<dbReference type="RefSeq" id="WP_000868345.1">
    <property type="nucleotide sequence ID" value="NC_012471.1"/>
</dbReference>
<dbReference type="SMR" id="C0M6X5"/>
<dbReference type="GeneID" id="93860206"/>
<dbReference type="KEGG" id="seu:SEQ_0078"/>
<dbReference type="HOGENOM" id="CLU_135723_6_2_9"/>
<dbReference type="OrthoDB" id="9802520at2"/>
<dbReference type="Proteomes" id="UP000001365">
    <property type="component" value="Chromosome"/>
</dbReference>
<dbReference type="GO" id="GO:0005737">
    <property type="term" value="C:cytoplasm"/>
    <property type="evidence" value="ECO:0007669"/>
    <property type="project" value="UniProtKB-ARBA"/>
</dbReference>
<dbReference type="GO" id="GO:1990904">
    <property type="term" value="C:ribonucleoprotein complex"/>
    <property type="evidence" value="ECO:0007669"/>
    <property type="project" value="UniProtKB-KW"/>
</dbReference>
<dbReference type="GO" id="GO:0005840">
    <property type="term" value="C:ribosome"/>
    <property type="evidence" value="ECO:0007669"/>
    <property type="project" value="UniProtKB-KW"/>
</dbReference>
<dbReference type="GO" id="GO:0003735">
    <property type="term" value="F:structural constituent of ribosome"/>
    <property type="evidence" value="ECO:0007669"/>
    <property type="project" value="InterPro"/>
</dbReference>
<dbReference type="GO" id="GO:0006412">
    <property type="term" value="P:translation"/>
    <property type="evidence" value="ECO:0007669"/>
    <property type="project" value="UniProtKB-UniRule"/>
</dbReference>
<dbReference type="HAMAP" id="MF_00251">
    <property type="entry name" value="Ribosomal_bL36"/>
    <property type="match status" value="1"/>
</dbReference>
<dbReference type="InterPro" id="IPR000473">
    <property type="entry name" value="Ribosomal_bL36"/>
</dbReference>
<dbReference type="InterPro" id="IPR035977">
    <property type="entry name" value="Ribosomal_bL36_sp"/>
</dbReference>
<dbReference type="NCBIfam" id="TIGR01022">
    <property type="entry name" value="rpmJ_bact"/>
    <property type="match status" value="1"/>
</dbReference>
<dbReference type="PANTHER" id="PTHR42888">
    <property type="entry name" value="50S RIBOSOMAL PROTEIN L36, CHLOROPLASTIC"/>
    <property type="match status" value="1"/>
</dbReference>
<dbReference type="PANTHER" id="PTHR42888:SF1">
    <property type="entry name" value="LARGE RIBOSOMAL SUBUNIT PROTEIN BL36C"/>
    <property type="match status" value="1"/>
</dbReference>
<dbReference type="Pfam" id="PF00444">
    <property type="entry name" value="Ribosomal_L36"/>
    <property type="match status" value="1"/>
</dbReference>
<dbReference type="SUPFAM" id="SSF57840">
    <property type="entry name" value="Ribosomal protein L36"/>
    <property type="match status" value="1"/>
</dbReference>
<dbReference type="PROSITE" id="PS00828">
    <property type="entry name" value="RIBOSOMAL_L36"/>
    <property type="match status" value="1"/>
</dbReference>
<keyword id="KW-0687">Ribonucleoprotein</keyword>
<keyword id="KW-0689">Ribosomal protein</keyword>
<feature type="chain" id="PRO_1000196210" description="Large ribosomal subunit protein bL36">
    <location>
        <begin position="1"/>
        <end position="38"/>
    </location>
</feature>
<name>RL36_STRE4</name>
<accession>C0M6X5</accession>
<proteinExistence type="inferred from homology"/>
<evidence type="ECO:0000255" key="1">
    <source>
        <dbReference type="HAMAP-Rule" id="MF_00251"/>
    </source>
</evidence>
<evidence type="ECO:0000305" key="2"/>
<reference key="1">
    <citation type="journal article" date="2009" name="PLoS Pathog.">
        <title>Genomic evidence for the evolution of Streptococcus equi: host restriction, increased virulence, and genetic exchange with human pathogens.</title>
        <authorList>
            <person name="Holden M.T.G."/>
            <person name="Heather Z."/>
            <person name="Paillot R."/>
            <person name="Steward K.F."/>
            <person name="Webb K."/>
            <person name="Ainslie F."/>
            <person name="Jourdan T."/>
            <person name="Bason N.C."/>
            <person name="Holroyd N.E."/>
            <person name="Mungall K."/>
            <person name="Quail M.A."/>
            <person name="Sanders M."/>
            <person name="Simmonds M."/>
            <person name="Willey D."/>
            <person name="Brooks K."/>
            <person name="Aanensen D.M."/>
            <person name="Spratt B.G."/>
            <person name="Jolley K.A."/>
            <person name="Maiden M.C.J."/>
            <person name="Kehoe M."/>
            <person name="Chanter N."/>
            <person name="Bentley S.D."/>
            <person name="Robinson C."/>
            <person name="Maskell D.J."/>
            <person name="Parkhill J."/>
            <person name="Waller A.S."/>
        </authorList>
    </citation>
    <scope>NUCLEOTIDE SEQUENCE [LARGE SCALE GENOMIC DNA]</scope>
    <source>
        <strain>4047</strain>
    </source>
</reference>
<gene>
    <name evidence="1" type="primary">rpmJ</name>
    <name type="ordered locus">SEQ_0078</name>
</gene>